<comment type="similarity">
    <text evidence="2">Belongs to the bacterial ribosomal protein bL34 family.</text>
</comment>
<evidence type="ECO:0000256" key="1">
    <source>
        <dbReference type="SAM" id="MobiDB-lite"/>
    </source>
</evidence>
<evidence type="ECO:0000305" key="2"/>
<name>RL34_MICLU</name>
<feature type="chain" id="PRO_0000187409" description="Large ribosomal subunit protein bL34">
    <location>
        <begin position="1"/>
        <end position="45"/>
    </location>
</feature>
<feature type="region of interest" description="Disordered" evidence="1">
    <location>
        <begin position="1"/>
        <end position="45"/>
    </location>
</feature>
<feature type="compositionally biased region" description="Basic residues" evidence="1">
    <location>
        <begin position="10"/>
        <end position="27"/>
    </location>
</feature>
<organism>
    <name type="scientific">Micrococcus luteus</name>
    <name type="common">Micrococcus lysodeikticus</name>
    <dbReference type="NCBI Taxonomy" id="1270"/>
    <lineage>
        <taxon>Bacteria</taxon>
        <taxon>Bacillati</taxon>
        <taxon>Actinomycetota</taxon>
        <taxon>Actinomycetes</taxon>
        <taxon>Micrococcales</taxon>
        <taxon>Micrococcaceae</taxon>
        <taxon>Micrococcus</taxon>
    </lineage>
</organism>
<gene>
    <name type="primary">rpmH</name>
</gene>
<proteinExistence type="inferred from homology"/>
<dbReference type="EMBL" id="M34006">
    <property type="protein sequence ID" value="AAA25314.1"/>
    <property type="molecule type" value="Genomic_DNA"/>
</dbReference>
<dbReference type="PIR" id="JQ0738">
    <property type="entry name" value="JQ0738"/>
</dbReference>
<dbReference type="RefSeq" id="WP_002856443.1">
    <property type="nucleotide sequence ID" value="NZ_VFQL01000024.1"/>
</dbReference>
<dbReference type="SMR" id="P21153"/>
<dbReference type="STRING" id="1232675.GCA_000309825_00376"/>
<dbReference type="GeneID" id="93363701"/>
<dbReference type="GO" id="GO:1990904">
    <property type="term" value="C:ribonucleoprotein complex"/>
    <property type="evidence" value="ECO:0007669"/>
    <property type="project" value="UniProtKB-KW"/>
</dbReference>
<dbReference type="GO" id="GO:0005840">
    <property type="term" value="C:ribosome"/>
    <property type="evidence" value="ECO:0007669"/>
    <property type="project" value="UniProtKB-KW"/>
</dbReference>
<dbReference type="GO" id="GO:0003735">
    <property type="term" value="F:structural constituent of ribosome"/>
    <property type="evidence" value="ECO:0007669"/>
    <property type="project" value="InterPro"/>
</dbReference>
<dbReference type="GO" id="GO:0006412">
    <property type="term" value="P:translation"/>
    <property type="evidence" value="ECO:0007669"/>
    <property type="project" value="UniProtKB-UniRule"/>
</dbReference>
<dbReference type="FunFam" id="1.10.287.3980:FF:000001">
    <property type="entry name" value="Mitochondrial ribosomal protein L34"/>
    <property type="match status" value="1"/>
</dbReference>
<dbReference type="Gene3D" id="1.10.287.3980">
    <property type="match status" value="1"/>
</dbReference>
<dbReference type="HAMAP" id="MF_00391">
    <property type="entry name" value="Ribosomal_bL34"/>
    <property type="match status" value="1"/>
</dbReference>
<dbReference type="InterPro" id="IPR000271">
    <property type="entry name" value="Ribosomal_bL34"/>
</dbReference>
<dbReference type="InterPro" id="IPR020939">
    <property type="entry name" value="Ribosomal_bL34_CS"/>
</dbReference>
<dbReference type="NCBIfam" id="TIGR01030">
    <property type="entry name" value="rpmH_bact"/>
    <property type="match status" value="1"/>
</dbReference>
<dbReference type="PANTHER" id="PTHR14503:SF4">
    <property type="entry name" value="LARGE RIBOSOMAL SUBUNIT PROTEIN BL34M"/>
    <property type="match status" value="1"/>
</dbReference>
<dbReference type="PANTHER" id="PTHR14503">
    <property type="entry name" value="MITOCHONDRIAL RIBOSOMAL PROTEIN 34 FAMILY MEMBER"/>
    <property type="match status" value="1"/>
</dbReference>
<dbReference type="Pfam" id="PF00468">
    <property type="entry name" value="Ribosomal_L34"/>
    <property type="match status" value="1"/>
</dbReference>
<dbReference type="PROSITE" id="PS00784">
    <property type="entry name" value="RIBOSOMAL_L34"/>
    <property type="match status" value="1"/>
</dbReference>
<sequence length="45" mass="5309">MTKRTFQPNNRRRARKHGFRARMRTRAGRAILSARRGKNRAELSA</sequence>
<reference key="1">
    <citation type="journal article" date="1990" name="Gene">
        <title>Structure of the dnaA region of Micrococcus luteus: conservation and variations among eubacteria.</title>
        <authorList>
            <person name="Fujita M.Q."/>
            <person name="Yoshikawa H."/>
            <person name="Ogasawara N."/>
        </authorList>
    </citation>
    <scope>NUCLEOTIDE SEQUENCE [GENOMIC DNA]</scope>
</reference>
<keyword id="KW-0687">Ribonucleoprotein</keyword>
<keyword id="KW-0689">Ribosomal protein</keyword>
<accession>P21153</accession>
<protein>
    <recommendedName>
        <fullName evidence="2">Large ribosomal subunit protein bL34</fullName>
    </recommendedName>
    <alternativeName>
        <fullName>50S ribosomal protein L34</fullName>
    </alternativeName>
</protein>